<comment type="function">
    <text evidence="2">Probably involved in the osmoprotection via the biosynthesis of trehalose and in the production of glycogen and alpha-glucan via the TreS-Pep2 branch involved in the biosynthesis of maltose-1-phosphate (M1P). Catalyzes the transfer of glucose from UDP-glucose (UDP-Glc) to D-glucose 6-phosphate (Glc-6-P) to form trehalose-6-phosphate. Probably also able to use ADP-Glc, CDP-Glc, GDP-Glc and TDP-Glc as glucosyl donors.</text>
</comment>
<comment type="catalytic activity">
    <reaction evidence="2">
        <text>ADP-alpha-D-glucose + D-glucose 6-phosphate = alpha,alpha-trehalose 6-phosphate + ADP + H(+)</text>
        <dbReference type="Rhea" id="RHEA:53880"/>
        <dbReference type="ChEBI" id="CHEBI:15378"/>
        <dbReference type="ChEBI" id="CHEBI:57498"/>
        <dbReference type="ChEBI" id="CHEBI:58429"/>
        <dbReference type="ChEBI" id="CHEBI:61548"/>
        <dbReference type="ChEBI" id="CHEBI:456216"/>
        <dbReference type="EC" id="2.4.1.347"/>
    </reaction>
</comment>
<comment type="catalytic activity">
    <reaction evidence="2">
        <text>CDP-alpha-D-glucose + D-glucose 6-phosphate = alpha,alpha-trehalose 6-phosphate + CDP + H(+)</text>
        <dbReference type="Rhea" id="RHEA:53884"/>
        <dbReference type="ChEBI" id="CHEBI:15378"/>
        <dbReference type="ChEBI" id="CHEBI:58069"/>
        <dbReference type="ChEBI" id="CHEBI:58429"/>
        <dbReference type="ChEBI" id="CHEBI:61548"/>
        <dbReference type="ChEBI" id="CHEBI:137927"/>
    </reaction>
</comment>
<comment type="catalytic activity">
    <reaction evidence="2">
        <text>GDP-alpha-D-glucose + D-glucose 6-phosphate = alpha,alpha-trehalose 6-phosphate + GDP + H(+)</text>
        <dbReference type="Rhea" id="RHEA:14605"/>
        <dbReference type="ChEBI" id="CHEBI:15378"/>
        <dbReference type="ChEBI" id="CHEBI:58189"/>
        <dbReference type="ChEBI" id="CHEBI:58429"/>
        <dbReference type="ChEBI" id="CHEBI:61548"/>
        <dbReference type="ChEBI" id="CHEBI:62230"/>
    </reaction>
</comment>
<comment type="catalytic activity">
    <reaction evidence="2">
        <text>TDP-alpha-D-glucose + D-glucose 6-phosphate = 5-methyl-UDP + alpha,alpha-trehalose 6-phosphate + H(+)</text>
        <dbReference type="Rhea" id="RHEA:53888"/>
        <dbReference type="ChEBI" id="CHEBI:15378"/>
        <dbReference type="ChEBI" id="CHEBI:58429"/>
        <dbReference type="ChEBI" id="CHEBI:61417"/>
        <dbReference type="ChEBI" id="CHEBI:61548"/>
        <dbReference type="ChEBI" id="CHEBI:137931"/>
    </reaction>
</comment>
<comment type="catalytic activity">
    <reaction evidence="2">
        <text>D-glucose 6-phosphate + UDP-alpha-D-glucose = alpha,alpha-trehalose 6-phosphate + UDP + H(+)</text>
        <dbReference type="Rhea" id="RHEA:18889"/>
        <dbReference type="ChEBI" id="CHEBI:15378"/>
        <dbReference type="ChEBI" id="CHEBI:58223"/>
        <dbReference type="ChEBI" id="CHEBI:58429"/>
        <dbReference type="ChEBI" id="CHEBI:58885"/>
        <dbReference type="ChEBI" id="CHEBI:61548"/>
        <dbReference type="EC" id="2.4.1.15"/>
    </reaction>
</comment>
<comment type="pathway">
    <text evidence="2">Glycan biosynthesis; trehalose biosynthesis.</text>
</comment>
<comment type="subunit">
    <text evidence="2">Homotetramer.</text>
</comment>
<comment type="similarity">
    <text evidence="2">Belongs to the glycosyltransferase 20 family.</text>
</comment>
<accession>Q743L8</accession>
<name>OTSA_MYCPA</name>
<reference key="1">
    <citation type="journal article" date="2005" name="Proc. Natl. Acad. Sci. U.S.A.">
        <title>The complete genome sequence of Mycobacterium avium subspecies paratuberculosis.</title>
        <authorList>
            <person name="Li L."/>
            <person name="Bannantine J.P."/>
            <person name="Zhang Q."/>
            <person name="Amonsin A."/>
            <person name="May B.J."/>
            <person name="Alt D."/>
            <person name="Banerji N."/>
            <person name="Kanjilal S."/>
            <person name="Kapur V."/>
        </authorList>
    </citation>
    <scope>NUCLEOTIDE SEQUENCE [LARGE SCALE GENOMIC DNA]</scope>
    <source>
        <strain>ATCC BAA-968 / K-10</strain>
    </source>
</reference>
<feature type="chain" id="PRO_0000348909" description="Trehalose-6-phosphate synthase">
    <location>
        <begin position="1"/>
        <end position="492"/>
    </location>
</feature>
<feature type="binding site" evidence="1">
    <location>
        <position position="25"/>
    </location>
    <ligand>
        <name>D-glucose 6-phosphate</name>
        <dbReference type="ChEBI" id="CHEBI:61548"/>
    </ligand>
</feature>
<feature type="binding site" evidence="1">
    <location>
        <begin position="45"/>
        <end position="46"/>
    </location>
    <ligand>
        <name>UDP-alpha-D-glucose</name>
        <dbReference type="ChEBI" id="CHEBI:58885"/>
    </ligand>
</feature>
<feature type="binding site" evidence="1">
    <location>
        <position position="101"/>
    </location>
    <ligand>
        <name>D-glucose 6-phosphate</name>
        <dbReference type="ChEBI" id="CHEBI:61548"/>
    </ligand>
</feature>
<feature type="binding site" evidence="1">
    <location>
        <position position="155"/>
    </location>
    <ligand>
        <name>D-glucose 6-phosphate</name>
        <dbReference type="ChEBI" id="CHEBI:61548"/>
    </ligand>
</feature>
<feature type="binding site" evidence="1">
    <location>
        <position position="297"/>
    </location>
    <ligand>
        <name>UDP-alpha-D-glucose</name>
        <dbReference type="ChEBI" id="CHEBI:58885"/>
    </ligand>
</feature>
<feature type="binding site" evidence="1">
    <location>
        <position position="302"/>
    </location>
    <ligand>
        <name>UDP-alpha-D-glucose</name>
        <dbReference type="ChEBI" id="CHEBI:58885"/>
    </ligand>
</feature>
<feature type="binding site" evidence="1">
    <location>
        <position position="335"/>
    </location>
    <ligand>
        <name>D-glucose 6-phosphate</name>
        <dbReference type="ChEBI" id="CHEBI:61548"/>
    </ligand>
</feature>
<feature type="binding site" evidence="1">
    <location>
        <begin position="400"/>
        <end position="404"/>
    </location>
    <ligand>
        <name>UDP-alpha-D-glucose</name>
        <dbReference type="ChEBI" id="CHEBI:58885"/>
    </ligand>
</feature>
<feature type="site" description="Involved in alpha anomer selectivity" evidence="1">
    <location>
        <position position="110"/>
    </location>
</feature>
<feature type="site" description="Involved in alpha anomer selectivity" evidence="1">
    <location>
        <position position="180"/>
    </location>
</feature>
<evidence type="ECO:0000250" key="1">
    <source>
        <dbReference type="UniProtKB" id="P31677"/>
    </source>
</evidence>
<evidence type="ECO:0000250" key="2">
    <source>
        <dbReference type="UniProtKB" id="P9WN11"/>
    </source>
</evidence>
<sequence length="492" mass="55204">MAPGGGRGSKTAGYGNSDFVVVANRLPVDQERLPDGSTAWKRSPGGLVTALEPLLRRQRGAWVGWPGIVDEDVDHEDDPIVQDDLELRPVKLSADDVAEYYEGFSNATLWPLYHDVIVKPIYHREWWDRYVAVNRRFAEATSRAAARGATVWVQDYQLQLVPAMLRELRPDLTIGFFLHIPFPPVELFMQLPWRTEIVKGLLGADLVGFHLTGGAQNFLFLSRRLIGANTSRGAVGMRSRYGEVELESRVVRVGAFPISIDSTALDQTARHRDIRRRAREIRAELGNPRKVLLGVDRLDYTKGIDVRLKAFSELLAEGRAKRDDTVLVQLATPSRERVDSYQQLRNDIERQVGHINGEYGEVGHPVVHYLHRPVPRNELIAFFVAADVMLVTPLRDGMNLVAKEYVACRSDLGGALVLSEFTGAAAELRQAYLVNPHDLEGVKDTVEAALNQSVEEGRRRMRSLRRQVLAHDVDRWARSFLDALAESGPRDG</sequence>
<dbReference type="EC" id="2.4.1.15" evidence="2"/>
<dbReference type="EC" id="2.4.1.347" evidence="2"/>
<dbReference type="EMBL" id="AE016958">
    <property type="protein sequence ID" value="AAS02890.1"/>
    <property type="molecule type" value="Genomic_DNA"/>
</dbReference>
<dbReference type="RefSeq" id="WP_003877165.1">
    <property type="nucleotide sequence ID" value="NZ_CP106873.1"/>
</dbReference>
<dbReference type="SMR" id="Q743L8"/>
<dbReference type="STRING" id="262316.MAP_0573c"/>
<dbReference type="CAZy" id="GT20">
    <property type="family name" value="Glycosyltransferase Family 20"/>
</dbReference>
<dbReference type="KEGG" id="mpa:MAP_0573c"/>
<dbReference type="PATRIC" id="fig|262316.17.peg.606"/>
<dbReference type="eggNOG" id="COG0380">
    <property type="taxonomic scope" value="Bacteria"/>
</dbReference>
<dbReference type="HOGENOM" id="CLU_002351_7_1_11"/>
<dbReference type="UniPathway" id="UPA00299"/>
<dbReference type="Proteomes" id="UP000000580">
    <property type="component" value="Chromosome"/>
</dbReference>
<dbReference type="GO" id="GO:0005829">
    <property type="term" value="C:cytosol"/>
    <property type="evidence" value="ECO:0007669"/>
    <property type="project" value="TreeGrafter"/>
</dbReference>
<dbReference type="GO" id="GO:0047260">
    <property type="term" value="F:alpha,alpha-trehalose-phosphate synthase (GDP-forming) activity"/>
    <property type="evidence" value="ECO:0007669"/>
    <property type="project" value="RHEA"/>
</dbReference>
<dbReference type="GO" id="GO:0003825">
    <property type="term" value="F:alpha,alpha-trehalose-phosphate synthase (UDP-forming) activity"/>
    <property type="evidence" value="ECO:0007669"/>
    <property type="project" value="UniProtKB-EC"/>
</dbReference>
<dbReference type="GO" id="GO:0004805">
    <property type="term" value="F:trehalose-phosphatase activity"/>
    <property type="evidence" value="ECO:0007669"/>
    <property type="project" value="TreeGrafter"/>
</dbReference>
<dbReference type="GO" id="GO:0005992">
    <property type="term" value="P:trehalose biosynthetic process"/>
    <property type="evidence" value="ECO:0007669"/>
    <property type="project" value="UniProtKB-UniPathway"/>
</dbReference>
<dbReference type="CDD" id="cd03788">
    <property type="entry name" value="GT20_TPS"/>
    <property type="match status" value="1"/>
</dbReference>
<dbReference type="FunFam" id="3.40.50.2000:FF:000102">
    <property type="entry name" value="Trehalose-6-phosphate synthase"/>
    <property type="match status" value="1"/>
</dbReference>
<dbReference type="Gene3D" id="3.40.50.2000">
    <property type="entry name" value="Glycogen Phosphorylase B"/>
    <property type="match status" value="2"/>
</dbReference>
<dbReference type="InterPro" id="IPR001830">
    <property type="entry name" value="Glyco_trans_20"/>
</dbReference>
<dbReference type="PANTHER" id="PTHR10788:SF106">
    <property type="entry name" value="BCDNA.GH08860"/>
    <property type="match status" value="1"/>
</dbReference>
<dbReference type="PANTHER" id="PTHR10788">
    <property type="entry name" value="TREHALOSE-6-PHOSPHATE SYNTHASE"/>
    <property type="match status" value="1"/>
</dbReference>
<dbReference type="Pfam" id="PF00982">
    <property type="entry name" value="Glyco_transf_20"/>
    <property type="match status" value="1"/>
</dbReference>
<dbReference type="SUPFAM" id="SSF53756">
    <property type="entry name" value="UDP-Glycosyltransferase/glycogen phosphorylase"/>
    <property type="match status" value="1"/>
</dbReference>
<protein>
    <recommendedName>
        <fullName evidence="2">Trehalose-6-phosphate synthase</fullName>
        <shortName evidence="2">TPS</shortName>
        <ecNumber evidence="2">2.4.1.15</ecNumber>
        <ecNumber evidence="2">2.4.1.347</ecNumber>
    </recommendedName>
    <alternativeName>
        <fullName evidence="2">Alpha,alpha-trehalose-phosphate synthase [UDP-forming]</fullName>
    </alternativeName>
    <alternativeName>
        <fullName evidence="1">Osmoregulatory trehalose synthesis protein A</fullName>
        <shortName evidence="1">OtsA</shortName>
    </alternativeName>
</protein>
<keyword id="KW-0328">Glycosyltransferase</keyword>
<keyword id="KW-1185">Reference proteome</keyword>
<keyword id="KW-0808">Transferase</keyword>
<proteinExistence type="inferred from homology"/>
<gene>
    <name evidence="2" type="primary">otsA</name>
    <name type="ordered locus">MAP_0573c</name>
</gene>
<organism>
    <name type="scientific">Mycolicibacterium paratuberculosis (strain ATCC BAA-968 / K-10)</name>
    <name type="common">Mycobacterium paratuberculosis</name>
    <dbReference type="NCBI Taxonomy" id="262316"/>
    <lineage>
        <taxon>Bacteria</taxon>
        <taxon>Bacillati</taxon>
        <taxon>Actinomycetota</taxon>
        <taxon>Actinomycetes</taxon>
        <taxon>Mycobacteriales</taxon>
        <taxon>Mycobacteriaceae</taxon>
        <taxon>Mycobacterium</taxon>
        <taxon>Mycobacterium avium complex (MAC)</taxon>
    </lineage>
</organism>